<accession>Q5PB38</accession>
<name>SYL_ANAMM</name>
<keyword id="KW-0030">Aminoacyl-tRNA synthetase</keyword>
<keyword id="KW-0067">ATP-binding</keyword>
<keyword id="KW-0963">Cytoplasm</keyword>
<keyword id="KW-0436">Ligase</keyword>
<keyword id="KW-0547">Nucleotide-binding</keyword>
<keyword id="KW-0648">Protein biosynthesis</keyword>
<sequence length="829" mass="94109">MEFFGMGYNFKLVEQEIQKRWDFKIAGNDGINCYVLGMFPYPSGNIHMGHIRNYTIGDVIARYKRAHGLKVLHPIGWDAFGLPAENAALSYGVNPAVWTERNIESMRKQLKSIGISYNWDRELATCKEDYYKHEQAFFLDFLQQGLAYRKESWVNWDPVDNTVLANEQVVDGRGWRSGAKIERRKLSQWFLKITDFADSLLDGLKTLDGWPEKVKLMQERWIGKTEGVILEFATSCGQKLEVFSTMPHMLFGASFCAVSAEHPILRHVTDEAFSARVRGIIECSGDEEKQKIGADTGLFATHPLLDRKLPIYAANYVLSEYGTGAVFGCPAHDQRDFEFAVAHGLDIYQVVFPDDGVQYDLQKEAYSGDGTYRNSEFLNGLRVDAARNAMIQKLESMGGCRRVTNYRLHDWGISRQRYWGCPIPVVHCEKCGIVPVDRQDLPISLPEEVDFSRGGNPLDHHPTWKHVQCPKCQSSAQRETDTFDTFFESSWYFAAFCSEQGGINAADCNKLLPVDYYIGGVEHAVLHLLYARFFCRALKKCGHLAVEEPFRNLITQGMVCHSVYRDAAGNYLFPEDAQRMIRDGEAVQRGKVEKMSKSKKNVVDPSHIIKKYGADTVRLFMLSDTPPERDIEWSDVGVEGAWRYLERLWRLFEDNSSIGADFDTADVKAEDRVYLSGIHKLLRGLSADMEHCRLNCAVAKFREMSNTVFEMVKCGVSQQVINESVCILLRVMEPFIPHIAEKLWERIGGEGMLCNRQWPSAREDLLTEDLVTIAVQVNGKLCSTLKVGAQCDGEEVKAEALKVAQRKLGDKEVRNIYFVPGRVVNIVTK</sequence>
<dbReference type="EC" id="6.1.1.4" evidence="1"/>
<dbReference type="EMBL" id="CP000030">
    <property type="protein sequence ID" value="AAV86492.1"/>
    <property type="molecule type" value="Genomic_DNA"/>
</dbReference>
<dbReference type="SMR" id="Q5PB38"/>
<dbReference type="KEGG" id="ama:AM446"/>
<dbReference type="HOGENOM" id="CLU_004427_0_0_5"/>
<dbReference type="GO" id="GO:0005829">
    <property type="term" value="C:cytosol"/>
    <property type="evidence" value="ECO:0007669"/>
    <property type="project" value="TreeGrafter"/>
</dbReference>
<dbReference type="GO" id="GO:0002161">
    <property type="term" value="F:aminoacyl-tRNA deacylase activity"/>
    <property type="evidence" value="ECO:0007669"/>
    <property type="project" value="InterPro"/>
</dbReference>
<dbReference type="GO" id="GO:0005524">
    <property type="term" value="F:ATP binding"/>
    <property type="evidence" value="ECO:0007669"/>
    <property type="project" value="UniProtKB-UniRule"/>
</dbReference>
<dbReference type="GO" id="GO:0004823">
    <property type="term" value="F:leucine-tRNA ligase activity"/>
    <property type="evidence" value="ECO:0007669"/>
    <property type="project" value="UniProtKB-UniRule"/>
</dbReference>
<dbReference type="GO" id="GO:0006429">
    <property type="term" value="P:leucyl-tRNA aminoacylation"/>
    <property type="evidence" value="ECO:0007669"/>
    <property type="project" value="UniProtKB-UniRule"/>
</dbReference>
<dbReference type="CDD" id="cd07958">
    <property type="entry name" value="Anticodon_Ia_Leu_BEm"/>
    <property type="match status" value="1"/>
</dbReference>
<dbReference type="CDD" id="cd00812">
    <property type="entry name" value="LeuRS_core"/>
    <property type="match status" value="1"/>
</dbReference>
<dbReference type="FunFam" id="1.10.730.10:FF:000002">
    <property type="entry name" value="Leucine--tRNA ligase"/>
    <property type="match status" value="1"/>
</dbReference>
<dbReference type="Gene3D" id="3.40.50.620">
    <property type="entry name" value="HUPs"/>
    <property type="match status" value="2"/>
</dbReference>
<dbReference type="Gene3D" id="1.10.730.10">
    <property type="entry name" value="Isoleucyl-tRNA Synthetase, Domain 1"/>
    <property type="match status" value="2"/>
</dbReference>
<dbReference type="HAMAP" id="MF_00049_B">
    <property type="entry name" value="Leu_tRNA_synth_B"/>
    <property type="match status" value="1"/>
</dbReference>
<dbReference type="InterPro" id="IPR001412">
    <property type="entry name" value="aa-tRNA-synth_I_CS"/>
</dbReference>
<dbReference type="InterPro" id="IPR002300">
    <property type="entry name" value="aa-tRNA-synth_Ia"/>
</dbReference>
<dbReference type="InterPro" id="IPR002302">
    <property type="entry name" value="Leu-tRNA-ligase"/>
</dbReference>
<dbReference type="InterPro" id="IPR025709">
    <property type="entry name" value="Leu_tRNA-synth_edit"/>
</dbReference>
<dbReference type="InterPro" id="IPR013155">
    <property type="entry name" value="M/V/L/I-tRNA-synth_anticd-bd"/>
</dbReference>
<dbReference type="InterPro" id="IPR015413">
    <property type="entry name" value="Methionyl/Leucyl_tRNA_Synth"/>
</dbReference>
<dbReference type="InterPro" id="IPR014729">
    <property type="entry name" value="Rossmann-like_a/b/a_fold"/>
</dbReference>
<dbReference type="InterPro" id="IPR009080">
    <property type="entry name" value="tRNAsynth_Ia_anticodon-bd"/>
</dbReference>
<dbReference type="InterPro" id="IPR009008">
    <property type="entry name" value="Val/Leu/Ile-tRNA-synth_edit"/>
</dbReference>
<dbReference type="NCBIfam" id="TIGR00396">
    <property type="entry name" value="leuS_bact"/>
    <property type="match status" value="1"/>
</dbReference>
<dbReference type="PANTHER" id="PTHR43740:SF2">
    <property type="entry name" value="LEUCINE--TRNA LIGASE, MITOCHONDRIAL"/>
    <property type="match status" value="1"/>
</dbReference>
<dbReference type="PANTHER" id="PTHR43740">
    <property type="entry name" value="LEUCYL-TRNA SYNTHETASE"/>
    <property type="match status" value="1"/>
</dbReference>
<dbReference type="Pfam" id="PF08264">
    <property type="entry name" value="Anticodon_1"/>
    <property type="match status" value="1"/>
</dbReference>
<dbReference type="Pfam" id="PF00133">
    <property type="entry name" value="tRNA-synt_1"/>
    <property type="match status" value="2"/>
</dbReference>
<dbReference type="Pfam" id="PF13603">
    <property type="entry name" value="tRNA-synt_1_2"/>
    <property type="match status" value="1"/>
</dbReference>
<dbReference type="Pfam" id="PF09334">
    <property type="entry name" value="tRNA-synt_1g"/>
    <property type="match status" value="1"/>
</dbReference>
<dbReference type="PRINTS" id="PR00985">
    <property type="entry name" value="TRNASYNTHLEU"/>
</dbReference>
<dbReference type="SUPFAM" id="SSF47323">
    <property type="entry name" value="Anticodon-binding domain of a subclass of class I aminoacyl-tRNA synthetases"/>
    <property type="match status" value="1"/>
</dbReference>
<dbReference type="SUPFAM" id="SSF52374">
    <property type="entry name" value="Nucleotidylyl transferase"/>
    <property type="match status" value="1"/>
</dbReference>
<dbReference type="SUPFAM" id="SSF50677">
    <property type="entry name" value="ValRS/IleRS/LeuRS editing domain"/>
    <property type="match status" value="1"/>
</dbReference>
<dbReference type="PROSITE" id="PS00178">
    <property type="entry name" value="AA_TRNA_LIGASE_I"/>
    <property type="match status" value="1"/>
</dbReference>
<feature type="chain" id="PRO_0000334727" description="Leucine--tRNA ligase">
    <location>
        <begin position="1"/>
        <end position="829"/>
    </location>
</feature>
<feature type="short sequence motif" description="'HIGH' region">
    <location>
        <begin position="40"/>
        <end position="50"/>
    </location>
</feature>
<feature type="short sequence motif" description="'KMSKS' region">
    <location>
        <begin position="594"/>
        <end position="598"/>
    </location>
</feature>
<feature type="binding site" evidence="1">
    <location>
        <position position="597"/>
    </location>
    <ligand>
        <name>ATP</name>
        <dbReference type="ChEBI" id="CHEBI:30616"/>
    </ligand>
</feature>
<proteinExistence type="inferred from homology"/>
<comment type="catalytic activity">
    <reaction evidence="1">
        <text>tRNA(Leu) + L-leucine + ATP = L-leucyl-tRNA(Leu) + AMP + diphosphate</text>
        <dbReference type="Rhea" id="RHEA:11688"/>
        <dbReference type="Rhea" id="RHEA-COMP:9613"/>
        <dbReference type="Rhea" id="RHEA-COMP:9622"/>
        <dbReference type="ChEBI" id="CHEBI:30616"/>
        <dbReference type="ChEBI" id="CHEBI:33019"/>
        <dbReference type="ChEBI" id="CHEBI:57427"/>
        <dbReference type="ChEBI" id="CHEBI:78442"/>
        <dbReference type="ChEBI" id="CHEBI:78494"/>
        <dbReference type="ChEBI" id="CHEBI:456215"/>
        <dbReference type="EC" id="6.1.1.4"/>
    </reaction>
</comment>
<comment type="subcellular location">
    <subcellularLocation>
        <location evidence="1">Cytoplasm</location>
    </subcellularLocation>
</comment>
<comment type="similarity">
    <text evidence="1">Belongs to the class-I aminoacyl-tRNA synthetase family.</text>
</comment>
<organism>
    <name type="scientific">Anaplasma marginale (strain St. Maries)</name>
    <dbReference type="NCBI Taxonomy" id="234826"/>
    <lineage>
        <taxon>Bacteria</taxon>
        <taxon>Pseudomonadati</taxon>
        <taxon>Pseudomonadota</taxon>
        <taxon>Alphaproteobacteria</taxon>
        <taxon>Rickettsiales</taxon>
        <taxon>Anaplasmataceae</taxon>
        <taxon>Anaplasma</taxon>
    </lineage>
</organism>
<gene>
    <name evidence="1" type="primary">leuS</name>
    <name type="ordered locus">AM446</name>
</gene>
<evidence type="ECO:0000255" key="1">
    <source>
        <dbReference type="HAMAP-Rule" id="MF_00049"/>
    </source>
</evidence>
<protein>
    <recommendedName>
        <fullName evidence="1">Leucine--tRNA ligase</fullName>
        <ecNumber evidence="1">6.1.1.4</ecNumber>
    </recommendedName>
    <alternativeName>
        <fullName evidence="1">Leucyl-tRNA synthetase</fullName>
        <shortName evidence="1">LeuRS</shortName>
    </alternativeName>
</protein>
<reference key="1">
    <citation type="journal article" date="2005" name="Proc. Natl. Acad. Sci. U.S.A.">
        <title>Complete genome sequencing of Anaplasma marginale reveals that the surface is skewed to two superfamilies of outer membrane proteins.</title>
        <authorList>
            <person name="Brayton K.A."/>
            <person name="Kappmeyer L.S."/>
            <person name="Herndon D.R."/>
            <person name="Dark M.J."/>
            <person name="Tibbals D.L."/>
            <person name="Palmer G.H."/>
            <person name="McGuire T.C."/>
            <person name="Knowles D.P. Jr."/>
        </authorList>
    </citation>
    <scope>NUCLEOTIDE SEQUENCE [LARGE SCALE GENOMIC DNA]</scope>
    <source>
        <strain>St. Maries</strain>
    </source>
</reference>